<feature type="signal peptide">
    <location>
        <begin position="1"/>
        <end position="21"/>
    </location>
</feature>
<feature type="propeptide" id="PRO_0000032119">
    <location>
        <begin position="22"/>
        <end position="38"/>
    </location>
</feature>
<feature type="chain" id="PRO_0000032120" description="Napin small chain">
    <location>
        <begin position="39"/>
        <end position="74"/>
    </location>
</feature>
<feature type="propeptide" id="PRO_0000032121">
    <location>
        <begin position="75"/>
        <end position="94"/>
    </location>
</feature>
<feature type="chain" id="PRO_0000032122" description="Napin large chain">
    <location>
        <begin position="95"/>
        <end position="180"/>
    </location>
</feature>
<dbReference type="EMBL" id="X17542">
    <property type="protein sequence ID" value="CAA35580.1"/>
    <property type="molecule type" value="Genomic_DNA"/>
</dbReference>
<dbReference type="EMBL" id="U04945">
    <property type="protein sequence ID" value="AAA81909.1"/>
    <property type="molecule type" value="mRNA"/>
</dbReference>
<dbReference type="PIR" id="S10018">
    <property type="entry name" value="S10018"/>
</dbReference>
<dbReference type="RefSeq" id="XP_013741649.1">
    <property type="nucleotide sequence ID" value="XM_013886195.1"/>
</dbReference>
<dbReference type="SMR" id="P17333"/>
<dbReference type="GeneID" id="106444749"/>
<dbReference type="KEGG" id="bna:106444749"/>
<dbReference type="OrthoDB" id="1922883at2759"/>
<dbReference type="GO" id="GO:0045735">
    <property type="term" value="F:nutrient reservoir activity"/>
    <property type="evidence" value="ECO:0007669"/>
    <property type="project" value="UniProtKB-KW"/>
</dbReference>
<dbReference type="CDD" id="cd00261">
    <property type="entry name" value="AAI_SS"/>
    <property type="match status" value="1"/>
</dbReference>
<dbReference type="Gene3D" id="1.10.110.10">
    <property type="entry name" value="Plant lipid-transfer and hydrophobic proteins"/>
    <property type="match status" value="1"/>
</dbReference>
<dbReference type="InterPro" id="IPR036312">
    <property type="entry name" value="Bifun_inhib/LTP/seed_sf"/>
</dbReference>
<dbReference type="InterPro" id="IPR016140">
    <property type="entry name" value="Bifunc_inhib/LTP/seed_store"/>
</dbReference>
<dbReference type="InterPro" id="IPR000617">
    <property type="entry name" value="Napin/2SS/CON"/>
</dbReference>
<dbReference type="PANTHER" id="PTHR35496">
    <property type="entry name" value="2S SEED STORAGE PROTEIN 1-RELATED"/>
    <property type="match status" value="1"/>
</dbReference>
<dbReference type="PANTHER" id="PTHR35496:SF11">
    <property type="entry name" value="BIFUNCTIONAL INHIBITOR_PLANT LIPID TRANSFER PROTEIN_SEED STORAGE HELICAL DOMAIN-CONTAINING PROTEIN"/>
    <property type="match status" value="1"/>
</dbReference>
<dbReference type="Pfam" id="PF00234">
    <property type="entry name" value="Tryp_alpha_amyl"/>
    <property type="match status" value="1"/>
</dbReference>
<dbReference type="PRINTS" id="PR00496">
    <property type="entry name" value="NAPIN"/>
</dbReference>
<dbReference type="SMART" id="SM00499">
    <property type="entry name" value="AAI"/>
    <property type="match status" value="1"/>
</dbReference>
<dbReference type="SUPFAM" id="SSF47699">
    <property type="entry name" value="Bifunctional inhibitor/lipid-transfer protein/seed storage 2S albumin"/>
    <property type="match status" value="1"/>
</dbReference>
<sequence>MANKLFLVSATLAFFFLLTNASIYRTIVEVDEDDATNPAGPFRIPKCRKEFQQAQHLKACQQWLHKQAMQSGSGPSWTLDGEFDFEDDMENPQGPQQRPPLLQQCCNELHQEEPLCVCPTLKGASKAVKQQVRQQQGQQGQQLQQVISRIYQTATHLPKVCNIPQVSVCPFQKTMPGPSY</sequence>
<reference key="1">
    <citation type="journal article" date="1990" name="Plant Mol. Biol.">
        <title>Isolation and nucleotide sequence of a genomic clone encoding a new Brassica napus napin gene.</title>
        <authorList>
            <person name="Baszczynski C.L."/>
            <person name="Fallis L."/>
        </authorList>
    </citation>
    <scope>NUCLEOTIDE SEQUENCE [GENOMIC DNA]</scope>
    <source>
        <strain>cv. Westar</strain>
        <tissue>Leaf</tissue>
    </source>
</reference>
<reference key="2">
    <citation type="journal article" date="1994" name="Plant Mol. Biol.">
        <title>Expression of the BnmNAP subfamily of napin genes coincides with the induction of Brassica microspore embryogenesis.</title>
        <authorList>
            <person name="Boutilier K.A."/>
            <person name="Gines M.J."/>
            <person name="Demoor J.M."/>
            <person name="Huang B."/>
            <person name="Baszczynski C.L."/>
            <person name="Iyer V.N."/>
            <person name="Miki B.L.A."/>
        </authorList>
    </citation>
    <scope>NUCLEOTIDE SEQUENCE [MRNA]</scope>
    <source>
        <strain>cv. Topas</strain>
    </source>
</reference>
<protein>
    <recommendedName>
        <fullName>Napin</fullName>
    </recommendedName>
    <alternativeName>
        <fullName>1.7S seed storage protein</fullName>
    </alternativeName>
    <component>
        <recommendedName>
            <fullName>Napin small chain</fullName>
        </recommendedName>
    </component>
    <component>
        <recommendedName>
            <fullName>Napin large chain</fullName>
        </recommendedName>
    </component>
</protein>
<organism>
    <name type="scientific">Brassica napus</name>
    <name type="common">Rape</name>
    <dbReference type="NCBI Taxonomy" id="3708"/>
    <lineage>
        <taxon>Eukaryota</taxon>
        <taxon>Viridiplantae</taxon>
        <taxon>Streptophyta</taxon>
        <taxon>Embryophyta</taxon>
        <taxon>Tracheophyta</taxon>
        <taxon>Spermatophyta</taxon>
        <taxon>Magnoliopsida</taxon>
        <taxon>eudicotyledons</taxon>
        <taxon>Gunneridae</taxon>
        <taxon>Pentapetalae</taxon>
        <taxon>rosids</taxon>
        <taxon>malvids</taxon>
        <taxon>Brassicales</taxon>
        <taxon>Brassicaceae</taxon>
        <taxon>Brassiceae</taxon>
        <taxon>Brassica</taxon>
    </lineage>
</organism>
<name>2SS4_BRANA</name>
<comment type="function">
    <text>The small, basic, water-soluble napins are one of the two major kinds of storage proteins synthesized in the seed during its maturation.</text>
</comment>
<comment type="subunit">
    <text>The mature protein consists of a small and a large chain linked by disulfide bonds.</text>
</comment>
<comment type="tissue specificity">
    <text>Cotyledons and the axis.</text>
</comment>
<comment type="similarity">
    <text evidence="1">Belongs to the 2S seed storage albumins family.</text>
</comment>
<gene>
    <name type="primary">NAP1</name>
</gene>
<keyword id="KW-1015">Disulfide bond</keyword>
<keyword id="KW-0708">Seed storage protein</keyword>
<keyword id="KW-0732">Signal</keyword>
<keyword id="KW-0758">Storage protein</keyword>
<accession>P17333</accession>
<proteinExistence type="evidence at transcript level"/>
<evidence type="ECO:0000305" key="1"/>